<keyword id="KW-0227">DNA damage</keyword>
<keyword id="KW-0234">DNA repair</keyword>
<keyword id="KW-1185">Reference proteome</keyword>
<sequence length="638" mass="70304">MMGIQILPPQLANQIAAGEVVERPASVVKELVENSLDAGASRVDIEIDKGGSKLIKIRDNGSGIPKDELALALSRHATSKLHTLDDLEAILSFGFRGEALASISSVSRLTLTSRTADQTEAWQAHAEGADMAVKVMPAAHPVGSTIEVVDLFFNTPARRRFLKSDKTEFTHIDEWLKRIALVRGDIHFTLTHNGKMVRNYRPAMNEAQYLQRLTQVCGRPFAEQALKIECQHDDLRLSGYLQSPWSPVISDTHYFYVNGRLIRDRLVNHAVRQAFAQKAELEQPGYVLMLDIDPHQVDVNVHPAKHEVRFHQSRYVHDYILQALQSALEEAGELNFVHSSSLDEVEDVFVDAPTSATEISAPFVLGADSAQVNVPADTLESAQPLVASAVQVKSAGAGREGTSFGTQTNAFGSMATPRDNSRGSYSAGESRQRTELPSKAAIASYGALLQTPSYSVKDQDYQPSLPMPAILDGQYWVMATADKLSLLPIKSVALATRCQEIEAKLATGLIGQPLLMPVSVAADADWQAVLDEHDTLIRQLGLELTIRYQQLIIKKVPPYIRESQLAKVIPEWLQSLRFETPAPSALAFWLAKHSLTGFVSAPEIWAAFSQLAEEKKQLIANKAILLPWQSWLEEQASE</sequence>
<reference key="1">
    <citation type="submission" date="2007-02" db="EMBL/GenBank/DDBJ databases">
        <title>Complete sequence of chromosome of Shewanella baltica OS155.</title>
        <authorList>
            <consortium name="US DOE Joint Genome Institute"/>
            <person name="Copeland A."/>
            <person name="Lucas S."/>
            <person name="Lapidus A."/>
            <person name="Barry K."/>
            <person name="Detter J.C."/>
            <person name="Glavina del Rio T."/>
            <person name="Hammon N."/>
            <person name="Israni S."/>
            <person name="Dalin E."/>
            <person name="Tice H."/>
            <person name="Pitluck S."/>
            <person name="Sims D.R."/>
            <person name="Brettin T."/>
            <person name="Bruce D."/>
            <person name="Han C."/>
            <person name="Tapia R."/>
            <person name="Brainard J."/>
            <person name="Schmutz J."/>
            <person name="Larimer F."/>
            <person name="Land M."/>
            <person name="Hauser L."/>
            <person name="Kyrpides N."/>
            <person name="Mikhailova N."/>
            <person name="Brettar I."/>
            <person name="Klappenbach J."/>
            <person name="Konstantinidis K."/>
            <person name="Rodrigues J."/>
            <person name="Tiedje J."/>
            <person name="Richardson P."/>
        </authorList>
    </citation>
    <scope>NUCLEOTIDE SEQUENCE [LARGE SCALE GENOMIC DNA]</scope>
    <source>
        <strain>OS155 / ATCC BAA-1091</strain>
    </source>
</reference>
<gene>
    <name evidence="1" type="primary">mutL</name>
    <name type="ordered locus">Sbal_0556</name>
</gene>
<proteinExistence type="inferred from homology"/>
<dbReference type="EMBL" id="CP000563">
    <property type="protein sequence ID" value="ABN60085.1"/>
    <property type="molecule type" value="Genomic_DNA"/>
</dbReference>
<dbReference type="SMR" id="A3D022"/>
<dbReference type="STRING" id="325240.Sbal_0556"/>
<dbReference type="KEGG" id="sbl:Sbal_0556"/>
<dbReference type="HOGENOM" id="CLU_004131_4_2_6"/>
<dbReference type="Proteomes" id="UP000001557">
    <property type="component" value="Chromosome"/>
</dbReference>
<dbReference type="GO" id="GO:0032300">
    <property type="term" value="C:mismatch repair complex"/>
    <property type="evidence" value="ECO:0007669"/>
    <property type="project" value="InterPro"/>
</dbReference>
<dbReference type="GO" id="GO:0005524">
    <property type="term" value="F:ATP binding"/>
    <property type="evidence" value="ECO:0007669"/>
    <property type="project" value="InterPro"/>
</dbReference>
<dbReference type="GO" id="GO:0016887">
    <property type="term" value="F:ATP hydrolysis activity"/>
    <property type="evidence" value="ECO:0007669"/>
    <property type="project" value="InterPro"/>
</dbReference>
<dbReference type="GO" id="GO:0140664">
    <property type="term" value="F:ATP-dependent DNA damage sensor activity"/>
    <property type="evidence" value="ECO:0007669"/>
    <property type="project" value="InterPro"/>
</dbReference>
<dbReference type="GO" id="GO:0030983">
    <property type="term" value="F:mismatched DNA binding"/>
    <property type="evidence" value="ECO:0007669"/>
    <property type="project" value="InterPro"/>
</dbReference>
<dbReference type="GO" id="GO:0006298">
    <property type="term" value="P:mismatch repair"/>
    <property type="evidence" value="ECO:0007669"/>
    <property type="project" value="UniProtKB-UniRule"/>
</dbReference>
<dbReference type="CDD" id="cd16926">
    <property type="entry name" value="HATPase_MutL-MLH-PMS-like"/>
    <property type="match status" value="1"/>
</dbReference>
<dbReference type="CDD" id="cd03482">
    <property type="entry name" value="MutL_Trans_MutL"/>
    <property type="match status" value="1"/>
</dbReference>
<dbReference type="FunFam" id="3.30.230.10:FF:000013">
    <property type="entry name" value="DNA mismatch repair endonuclease MutL"/>
    <property type="match status" value="1"/>
</dbReference>
<dbReference type="FunFam" id="3.30.565.10:FF:000003">
    <property type="entry name" value="DNA mismatch repair endonuclease MutL"/>
    <property type="match status" value="1"/>
</dbReference>
<dbReference type="Gene3D" id="3.30.230.10">
    <property type="match status" value="1"/>
</dbReference>
<dbReference type="Gene3D" id="3.30.565.10">
    <property type="entry name" value="Histidine kinase-like ATPase, C-terminal domain"/>
    <property type="match status" value="1"/>
</dbReference>
<dbReference type="Gene3D" id="3.30.1370.100">
    <property type="entry name" value="MutL, C-terminal domain, regulatory subdomain"/>
    <property type="match status" value="1"/>
</dbReference>
<dbReference type="HAMAP" id="MF_00149">
    <property type="entry name" value="DNA_mis_repair"/>
    <property type="match status" value="1"/>
</dbReference>
<dbReference type="InterPro" id="IPR014762">
    <property type="entry name" value="DNA_mismatch_repair_CS"/>
</dbReference>
<dbReference type="InterPro" id="IPR020667">
    <property type="entry name" value="DNA_mismatch_repair_MutL"/>
</dbReference>
<dbReference type="InterPro" id="IPR013507">
    <property type="entry name" value="DNA_mismatch_S5_2-like"/>
</dbReference>
<dbReference type="InterPro" id="IPR036890">
    <property type="entry name" value="HATPase_C_sf"/>
</dbReference>
<dbReference type="InterPro" id="IPR002099">
    <property type="entry name" value="MutL/Mlh/PMS"/>
</dbReference>
<dbReference type="InterPro" id="IPR038973">
    <property type="entry name" value="MutL/Mlh/Pms-like"/>
</dbReference>
<dbReference type="InterPro" id="IPR014790">
    <property type="entry name" value="MutL_C"/>
</dbReference>
<dbReference type="InterPro" id="IPR042121">
    <property type="entry name" value="MutL_C_regsub"/>
</dbReference>
<dbReference type="InterPro" id="IPR037198">
    <property type="entry name" value="MutL_C_sf"/>
</dbReference>
<dbReference type="InterPro" id="IPR020568">
    <property type="entry name" value="Ribosomal_Su5_D2-typ_SF"/>
</dbReference>
<dbReference type="InterPro" id="IPR014721">
    <property type="entry name" value="Ribsml_uS5_D2-typ_fold_subgr"/>
</dbReference>
<dbReference type="NCBIfam" id="TIGR00585">
    <property type="entry name" value="mutl"/>
    <property type="match status" value="1"/>
</dbReference>
<dbReference type="NCBIfam" id="NF000948">
    <property type="entry name" value="PRK00095.1-1"/>
    <property type="match status" value="1"/>
</dbReference>
<dbReference type="PANTHER" id="PTHR10073">
    <property type="entry name" value="DNA MISMATCH REPAIR PROTEIN MLH, PMS, MUTL"/>
    <property type="match status" value="1"/>
</dbReference>
<dbReference type="PANTHER" id="PTHR10073:SF12">
    <property type="entry name" value="DNA MISMATCH REPAIR PROTEIN MLH1"/>
    <property type="match status" value="1"/>
</dbReference>
<dbReference type="Pfam" id="PF01119">
    <property type="entry name" value="DNA_mis_repair"/>
    <property type="match status" value="1"/>
</dbReference>
<dbReference type="Pfam" id="PF13589">
    <property type="entry name" value="HATPase_c_3"/>
    <property type="match status" value="1"/>
</dbReference>
<dbReference type="Pfam" id="PF08676">
    <property type="entry name" value="MutL_C"/>
    <property type="match status" value="1"/>
</dbReference>
<dbReference type="SMART" id="SM01340">
    <property type="entry name" value="DNA_mis_repair"/>
    <property type="match status" value="1"/>
</dbReference>
<dbReference type="SMART" id="SM00853">
    <property type="entry name" value="MutL_C"/>
    <property type="match status" value="1"/>
</dbReference>
<dbReference type="SUPFAM" id="SSF55874">
    <property type="entry name" value="ATPase domain of HSP90 chaperone/DNA topoisomerase II/histidine kinase"/>
    <property type="match status" value="1"/>
</dbReference>
<dbReference type="SUPFAM" id="SSF118116">
    <property type="entry name" value="DNA mismatch repair protein MutL"/>
    <property type="match status" value="1"/>
</dbReference>
<dbReference type="SUPFAM" id="SSF54211">
    <property type="entry name" value="Ribosomal protein S5 domain 2-like"/>
    <property type="match status" value="1"/>
</dbReference>
<dbReference type="PROSITE" id="PS00058">
    <property type="entry name" value="DNA_MISMATCH_REPAIR_1"/>
    <property type="match status" value="1"/>
</dbReference>
<protein>
    <recommendedName>
        <fullName evidence="1">DNA mismatch repair protein MutL</fullName>
    </recommendedName>
</protein>
<organism>
    <name type="scientific">Shewanella baltica (strain OS155 / ATCC BAA-1091)</name>
    <dbReference type="NCBI Taxonomy" id="325240"/>
    <lineage>
        <taxon>Bacteria</taxon>
        <taxon>Pseudomonadati</taxon>
        <taxon>Pseudomonadota</taxon>
        <taxon>Gammaproteobacteria</taxon>
        <taxon>Alteromonadales</taxon>
        <taxon>Shewanellaceae</taxon>
        <taxon>Shewanella</taxon>
    </lineage>
</organism>
<comment type="function">
    <text evidence="1">This protein is involved in the repair of mismatches in DNA. It is required for dam-dependent methyl-directed DNA mismatch repair. May act as a 'molecular matchmaker', a protein that promotes the formation of a stable complex between two or more DNA-binding proteins in an ATP-dependent manner without itself being part of a final effector complex.</text>
</comment>
<comment type="similarity">
    <text evidence="1">Belongs to the DNA mismatch repair MutL/HexB family.</text>
</comment>
<evidence type="ECO:0000255" key="1">
    <source>
        <dbReference type="HAMAP-Rule" id="MF_00149"/>
    </source>
</evidence>
<evidence type="ECO:0000256" key="2">
    <source>
        <dbReference type="SAM" id="MobiDB-lite"/>
    </source>
</evidence>
<name>MUTL_SHEB5</name>
<accession>A3D022</accession>
<feature type="chain" id="PRO_1000010074" description="DNA mismatch repair protein MutL">
    <location>
        <begin position="1"/>
        <end position="638"/>
    </location>
</feature>
<feature type="region of interest" description="Disordered" evidence="2">
    <location>
        <begin position="398"/>
        <end position="435"/>
    </location>
</feature>